<comment type="function">
    <text evidence="1 2 3">Catalyzes the oxidation of D-galacturonate and D-glucuronate to galactarate and D-glucarate, respectively. In fact, in water solution the substrate D-galacturonate is predominantly in pyranosic form whose beta anomer is converted by the enzyme to D-galactaro-1,5-lactone; in solution, this reaction product rearranges to the more stable D-galactaro-1,4-lactone. Makes part of the oxidative degradation pathway of D-galacturonate, which allows A.tumefaciens to utilize D-galacturonate as a sole carbon source. Cannot use NADP(+) instead of NAD(+) as cosubstrate. Is not active on D-galactose, D-glucose, D-galactonate and D-gluconate.</text>
</comment>
<comment type="catalytic activity">
    <reaction evidence="1 2">
        <text>beta-D-galacturonate + NAD(+) = D-galactaro-1,5-lactone + NADH + H(+)</text>
        <dbReference type="Rhea" id="RHEA:22404"/>
        <dbReference type="ChEBI" id="CHEBI:15378"/>
        <dbReference type="ChEBI" id="CHEBI:57540"/>
        <dbReference type="ChEBI" id="CHEBI:57945"/>
        <dbReference type="ChEBI" id="CHEBI:83383"/>
        <dbReference type="ChEBI" id="CHEBI:85312"/>
        <dbReference type="EC" id="1.1.1.203"/>
    </reaction>
</comment>
<comment type="catalytic activity">
    <reaction evidence="1 2">
        <text>beta-D-glucuronate + NAD(+) = D-glucaro-1,5-lactone + NADH + H(+)</text>
        <dbReference type="Rhea" id="RHEA:43500"/>
        <dbReference type="ChEBI" id="CHEBI:15378"/>
        <dbReference type="ChEBI" id="CHEBI:57540"/>
        <dbReference type="ChEBI" id="CHEBI:57945"/>
        <dbReference type="ChEBI" id="CHEBI:83384"/>
        <dbReference type="ChEBI" id="CHEBI:85313"/>
        <dbReference type="EC" id="1.1.1.203"/>
    </reaction>
</comment>
<comment type="biophysicochemical properties">
    <kinetics>
        <KM evidence="1">0.37 mM for D-glucuronate</KM>
        <KM evidence="2">1.1 mM for D-glucuronate</KM>
        <KM evidence="1">0.16 mM for D-galacturonate</KM>
        <KM evidence="2">0.5 mM for D-galacturonate</KM>
        <KM evidence="1">0.18 mM for NAD(+)</KM>
        <KM evidence="2">0.2 mM for NAD(+)</KM>
        <Vmax evidence="2">221.0 umol/min/mg enzyme with D-glucuronate as substrate</Vmax>
        <Vmax evidence="2">124.0 umol/min/mg enzyme with D-galacturonate as substrate</Vmax>
        <text evidence="1">kcat is 190 sec(-1) and 92 sec(-1) with D-glucuronate and D-galacturonate as substrate, respectively.</text>
    </kinetics>
    <phDependence>
        <text evidence="1">Optimum pH is 8.</text>
    </phDependence>
    <temperatureDependence>
        <text evidence="1">Activity increases with increasing temperatures between 4 and 42 degrees Celsius. Activity remains near 80% of the maximum after exposure at 37 degrees Celsius for 30 minutes.</text>
    </temperatureDependence>
</comment>
<comment type="pathway">
    <text evidence="4">Carbohydrate acid metabolism; D-galacturonate degradation via prokaryotic oxidative pathway.</text>
</comment>
<comment type="subunit">
    <text evidence="3">Homohexamer.</text>
</comment>
<comment type="induction">
    <text evidence="2">By D-galacturonate.</text>
</comment>
<comment type="miscellaneous">
    <text evidence="6">D-galactaro-1,4-lactone was previously believed to be the product of the reaction of D-galacturonate oxidation.</text>
</comment>
<comment type="similarity">
    <text evidence="5">Belongs to the NAD(P)-dependent epimerase/dehydratase family.</text>
</comment>
<keyword id="KW-0002">3D-structure</keyword>
<keyword id="KW-0520">NAD</keyword>
<keyword id="KW-0547">Nucleotide-binding</keyword>
<keyword id="KW-0560">Oxidoreductase</keyword>
<keyword id="KW-1185">Reference proteome</keyword>
<evidence type="ECO:0000269" key="1">
    <source>
    </source>
</evidence>
<evidence type="ECO:0000269" key="2">
    <source>
    </source>
</evidence>
<evidence type="ECO:0000269" key="3">
    <source>
    </source>
</evidence>
<evidence type="ECO:0000269" key="4">
    <source>
    </source>
</evidence>
<evidence type="ECO:0000305" key="5"/>
<evidence type="ECO:0000305" key="6">
    <source>
    </source>
</evidence>
<evidence type="ECO:0000305" key="7">
    <source>
    </source>
</evidence>
<evidence type="ECO:0007829" key="8">
    <source>
        <dbReference type="PDB" id="3RFT"/>
    </source>
</evidence>
<proteinExistence type="evidence at protein level"/>
<reference key="1">
    <citation type="journal article" date="2001" name="Science">
        <title>The genome of the natural genetic engineer Agrobacterium tumefaciens C58.</title>
        <authorList>
            <person name="Wood D.W."/>
            <person name="Setubal J.C."/>
            <person name="Kaul R."/>
            <person name="Monks D.E."/>
            <person name="Kitajima J.P."/>
            <person name="Okura V.K."/>
            <person name="Zhou Y."/>
            <person name="Chen L."/>
            <person name="Wood G.E."/>
            <person name="Almeida N.F. Jr."/>
            <person name="Woo L."/>
            <person name="Chen Y."/>
            <person name="Paulsen I.T."/>
            <person name="Eisen J.A."/>
            <person name="Karp P.D."/>
            <person name="Bovee D. Sr."/>
            <person name="Chapman P."/>
            <person name="Clendenning J."/>
            <person name="Deatherage G."/>
            <person name="Gillet W."/>
            <person name="Grant C."/>
            <person name="Kutyavin T."/>
            <person name="Levy R."/>
            <person name="Li M.-J."/>
            <person name="McClelland E."/>
            <person name="Palmieri A."/>
            <person name="Raymond C."/>
            <person name="Rouse G."/>
            <person name="Saenphimmachak C."/>
            <person name="Wu Z."/>
            <person name="Romero P."/>
            <person name="Gordon D."/>
            <person name="Zhang S."/>
            <person name="Yoo H."/>
            <person name="Tao Y."/>
            <person name="Biddle P."/>
            <person name="Jung M."/>
            <person name="Krespan W."/>
            <person name="Perry M."/>
            <person name="Gordon-Kamm B."/>
            <person name="Liao L."/>
            <person name="Kim S."/>
            <person name="Hendrick C."/>
            <person name="Zhao Z.-Y."/>
            <person name="Dolan M."/>
            <person name="Chumley F."/>
            <person name="Tingey S.V."/>
            <person name="Tomb J.-F."/>
            <person name="Gordon M.P."/>
            <person name="Olson M.V."/>
            <person name="Nester E.W."/>
        </authorList>
    </citation>
    <scope>NUCLEOTIDE SEQUENCE [LARGE SCALE GENOMIC DNA]</scope>
    <source>
        <strain>C58 / ATCC 33970</strain>
    </source>
</reference>
<reference key="2">
    <citation type="journal article" date="2001" name="Science">
        <title>Genome sequence of the plant pathogen and biotechnology agent Agrobacterium tumefaciens C58.</title>
        <authorList>
            <person name="Goodner B."/>
            <person name="Hinkle G."/>
            <person name="Gattung S."/>
            <person name="Miller N."/>
            <person name="Blanchard M."/>
            <person name="Qurollo B."/>
            <person name="Goldman B.S."/>
            <person name="Cao Y."/>
            <person name="Askenazi M."/>
            <person name="Halling C."/>
            <person name="Mullin L."/>
            <person name="Houmiel K."/>
            <person name="Gordon J."/>
            <person name="Vaudin M."/>
            <person name="Iartchouk O."/>
            <person name="Epp A."/>
            <person name="Liu F."/>
            <person name="Wollam C."/>
            <person name="Allinger M."/>
            <person name="Doughty D."/>
            <person name="Scott C."/>
            <person name="Lappas C."/>
            <person name="Markelz B."/>
            <person name="Flanagan C."/>
            <person name="Crowell C."/>
            <person name="Gurson J."/>
            <person name="Lomo C."/>
            <person name="Sear C."/>
            <person name="Strub G."/>
            <person name="Cielo C."/>
            <person name="Slater S."/>
        </authorList>
    </citation>
    <scope>NUCLEOTIDE SEQUENCE [LARGE SCALE GENOMIC DNA]</scope>
    <source>
        <strain>C58 / ATCC 33970</strain>
    </source>
</reference>
<reference key="3">
    <citation type="journal article" date="2009" name="J. Bacteriol.">
        <title>Cloning and characterization of uronate dehydrogenases from two pseudomonads and Agrobacterium tumefaciens strain C58.</title>
        <authorList>
            <person name="Yoon S.H."/>
            <person name="Moon T.S."/>
            <person name="Iranpour P."/>
            <person name="Lanza A.M."/>
            <person name="Prather K.J."/>
        </authorList>
    </citation>
    <scope>IDENTIFICATION</scope>
    <scope>FUNCTION</scope>
    <scope>GENE NAME</scope>
    <scope>CATALYTIC ACTIVITY</scope>
    <scope>BIOPHYSICOCHEMICAL PROPERTIES</scope>
    <source>
        <strain>C58 / ATCC 33970</strain>
    </source>
</reference>
<reference key="4">
    <citation type="journal article" date="2010" name="Appl. Microbiol. Biotechnol.">
        <title>Identification in Agrobacterium tumefaciens of the D-galacturonic acid dehydrogenase gene.</title>
        <authorList>
            <person name="Boer H."/>
            <person name="Maaheimo H."/>
            <person name="Koivula A."/>
            <person name="Penttila M."/>
            <person name="Richard P."/>
        </authorList>
    </citation>
    <scope>IDENTIFICATION BY MASS SPECTROMETRY</scope>
    <scope>FUNCTION</scope>
    <scope>CATALYTIC ACTIVITY</scope>
    <scope>KINETIC PARAMETERS</scope>
    <scope>SUBSTRATE SPECIFICITY</scope>
    <scope>INDUCTION</scope>
    <source>
        <strain>C58 / ATCC 33970</strain>
    </source>
</reference>
<reference key="5">
    <citation type="journal article" date="2014" name="Biochemistry">
        <title>Galactaro delta-lactone isomerase: lactone isomerization by a member of the amidohydrolase superfamily.</title>
        <authorList>
            <person name="Bouvier J.T."/>
            <person name="Groninger-Poe F.P."/>
            <person name="Vetting M."/>
            <person name="Almo S.C."/>
            <person name="Gerlt J.A."/>
        </authorList>
    </citation>
    <scope>PATHWAY</scope>
    <source>
        <strain>C58 / ATCC 33970</strain>
    </source>
</reference>
<reference key="6">
    <citation type="journal article" date="2011" name="J. Biol. Chem.">
        <title>Crystal structure of uronate dehydrogenase from Agrobacterium tumefaciens.</title>
        <authorList>
            <person name="Parkkinen T."/>
            <person name="Boer H."/>
            <person name="Janis J."/>
            <person name="Andberg M."/>
            <person name="Penttila M."/>
            <person name="Koivula A."/>
            <person name="Rouvinen J."/>
        </authorList>
    </citation>
    <scope>X-RAY CRYSTALLOGRAPHY (1.90 ANGSTROMS) OF APOENZYME AND MUTANT ALA-134 IN COMPLEXES WITH NAD AND D-GALACTARO-1,5-LACTONE</scope>
    <scope>FUNCTION</scope>
    <scope>IDENTIFICATION OF THE REACTION PRODUCT</scope>
    <scope>SUBUNIT</scope>
    <scope>REACTION MECHANISM</scope>
    <scope>ACTIVE SITE</scope>
    <scope>MUTAGENESIS OF TYR-134</scope>
    <source>
        <strain>C58 / ATCC 33970</strain>
    </source>
</reference>
<name>URODH_AGRFC</name>
<dbReference type="EC" id="1.1.1.203" evidence="1 2"/>
<dbReference type="EMBL" id="AE007870">
    <property type="protein sequence ID" value="AAK90243.2"/>
    <property type="molecule type" value="Genomic_DNA"/>
</dbReference>
<dbReference type="EMBL" id="BK006462">
    <property type="protein sequence ID" value="DAA06454.1"/>
    <property type="molecule type" value="Genomic_DNA"/>
</dbReference>
<dbReference type="RefSeq" id="NP_357458.2">
    <property type="nucleotide sequence ID" value="NC_003063.2"/>
</dbReference>
<dbReference type="RefSeq" id="WP_010972793.1">
    <property type="nucleotide sequence ID" value="NC_003063.2"/>
</dbReference>
<dbReference type="PDB" id="3RFT">
    <property type="method" value="X-ray"/>
    <property type="resolution" value="1.90 A"/>
    <property type="chains" value="A/B/C=1-265"/>
</dbReference>
<dbReference type="PDB" id="3RFV">
    <property type="method" value="X-ray"/>
    <property type="resolution" value="2.10 A"/>
    <property type="chains" value="A/B/C=1-265"/>
</dbReference>
<dbReference type="PDB" id="3RFX">
    <property type="method" value="X-ray"/>
    <property type="resolution" value="1.90 A"/>
    <property type="chains" value="A/B/C=1-265"/>
</dbReference>
<dbReference type="PDBsum" id="3RFT"/>
<dbReference type="PDBsum" id="3RFV"/>
<dbReference type="PDBsum" id="3RFX"/>
<dbReference type="SMR" id="Q7CRQ0"/>
<dbReference type="STRING" id="176299.Atu3143"/>
<dbReference type="EnsemblBacteria" id="AAK90243">
    <property type="protein sequence ID" value="AAK90243"/>
    <property type="gene ID" value="Atu3143"/>
</dbReference>
<dbReference type="GeneID" id="1134945"/>
<dbReference type="KEGG" id="atu:Atu3143"/>
<dbReference type="PATRIC" id="fig|176299.10.peg.2988"/>
<dbReference type="eggNOG" id="COG0451">
    <property type="taxonomic scope" value="Bacteria"/>
</dbReference>
<dbReference type="HOGENOM" id="CLU_079334_0_0_5"/>
<dbReference type="OrthoDB" id="8770295at2"/>
<dbReference type="PhylomeDB" id="Q7CRQ0"/>
<dbReference type="BioCyc" id="AGRO:ATU3143-MONOMER"/>
<dbReference type="BioCyc" id="MetaCyc:MONOMER-15610"/>
<dbReference type="BRENDA" id="1.1.1.203">
    <property type="organism ID" value="200"/>
</dbReference>
<dbReference type="UniPathway" id="UPA01050"/>
<dbReference type="EvolutionaryTrace" id="Q7CRQ0"/>
<dbReference type="Proteomes" id="UP000000813">
    <property type="component" value="Chromosome linear"/>
</dbReference>
<dbReference type="GO" id="GO:0000166">
    <property type="term" value="F:nucleotide binding"/>
    <property type="evidence" value="ECO:0007669"/>
    <property type="project" value="UniProtKB-KW"/>
</dbReference>
<dbReference type="GO" id="GO:0050388">
    <property type="term" value="F:uronate dehydrogenase activity"/>
    <property type="evidence" value="ECO:0000314"/>
    <property type="project" value="CACAO"/>
</dbReference>
<dbReference type="FunFam" id="3.40.50.720:FF:000879">
    <property type="entry name" value="Uronate dehydrogenase"/>
    <property type="match status" value="1"/>
</dbReference>
<dbReference type="Gene3D" id="3.40.50.720">
    <property type="entry name" value="NAD(P)-binding Rossmann-like Domain"/>
    <property type="match status" value="1"/>
</dbReference>
<dbReference type="InterPro" id="IPR001509">
    <property type="entry name" value="Epimerase_deHydtase"/>
</dbReference>
<dbReference type="InterPro" id="IPR036291">
    <property type="entry name" value="NAD(P)-bd_dom_sf"/>
</dbReference>
<dbReference type="PANTHER" id="PTHR43103:SF5">
    <property type="entry name" value="4-EPIMERASE, PUTATIVE (AFU_ORTHOLOGUE AFUA_7G00360)-RELATED"/>
    <property type="match status" value="1"/>
</dbReference>
<dbReference type="PANTHER" id="PTHR43103">
    <property type="entry name" value="NUCLEOSIDE-DIPHOSPHATE-SUGAR EPIMERASE"/>
    <property type="match status" value="1"/>
</dbReference>
<dbReference type="Pfam" id="PF01370">
    <property type="entry name" value="Epimerase"/>
    <property type="match status" value="1"/>
</dbReference>
<dbReference type="SUPFAM" id="SSF51735">
    <property type="entry name" value="NAD(P)-binding Rossmann-fold domains"/>
    <property type="match status" value="1"/>
</dbReference>
<sequence length="265" mass="29047">MKRLLVTGAAGQLGRVMRERLAPMAEILRLADLSPLDPAGPNEECVQCDLADANAVNAMVAGCDGIVHLGGISVEKPFEQILQGNIIGLYNLYEAARAHGQPRIVFASSNHTIGYYPQTERLGPDVPARPDGLYGVSKCFGENLARMYFDKFGQETALVRIGSCTPEPNNYRMLSTWFSHDDFVSLIEAVFRAPVLGCPVVWGASANDAGWWDNSHLGFLGWKPKDNAEAFRRHITETTPPPDPNDALVRFQGGTFVDNPIFKQS</sequence>
<organism>
    <name type="scientific">Agrobacterium fabrum (strain C58 / ATCC 33970)</name>
    <name type="common">Agrobacterium tumefaciens (strain C58)</name>
    <dbReference type="NCBI Taxonomy" id="176299"/>
    <lineage>
        <taxon>Bacteria</taxon>
        <taxon>Pseudomonadati</taxon>
        <taxon>Pseudomonadota</taxon>
        <taxon>Alphaproteobacteria</taxon>
        <taxon>Hyphomicrobiales</taxon>
        <taxon>Rhizobiaceae</taxon>
        <taxon>Rhizobium/Agrobacterium group</taxon>
        <taxon>Agrobacterium</taxon>
        <taxon>Agrobacterium tumefaciens complex</taxon>
    </lineage>
</organism>
<accession>Q7CRQ0</accession>
<gene>
    <name type="primary">udh</name>
    <name type="ordered locus">Atu3143</name>
</gene>
<feature type="chain" id="PRO_0000429434" description="Uronate dehydrogenase">
    <location>
        <begin position="1"/>
        <end position="265"/>
    </location>
</feature>
<feature type="active site" description="Proton acceptor" evidence="7">
    <location>
        <position position="134"/>
    </location>
</feature>
<feature type="binding site">
    <location>
        <begin position="12"/>
        <end position="13"/>
    </location>
    <ligand>
        <name>NAD(+)</name>
        <dbReference type="ChEBI" id="CHEBI:57540"/>
    </ligand>
</feature>
<feature type="binding site">
    <location>
        <begin position="32"/>
        <end position="34"/>
    </location>
    <ligand>
        <name>NAD(+)</name>
        <dbReference type="ChEBI" id="CHEBI:57540"/>
    </ligand>
</feature>
<feature type="binding site">
    <location>
        <begin position="49"/>
        <end position="50"/>
    </location>
    <ligand>
        <name>NAD(+)</name>
        <dbReference type="ChEBI" id="CHEBI:57540"/>
    </ligand>
</feature>
<feature type="binding site">
    <location>
        <begin position="69"/>
        <end position="73"/>
    </location>
    <ligand>
        <name>NAD(+)</name>
        <dbReference type="ChEBI" id="CHEBI:57540"/>
    </ligand>
</feature>
<feature type="binding site">
    <location>
        <position position="73"/>
    </location>
    <ligand>
        <name>substrate</name>
    </ligand>
</feature>
<feature type="binding site">
    <location>
        <begin position="109"/>
        <end position="111"/>
    </location>
    <ligand>
        <name>substrate</name>
    </ligand>
</feature>
<feature type="binding site">
    <location>
        <position position="138"/>
    </location>
    <ligand>
        <name>NAD(+)</name>
        <dbReference type="ChEBI" id="CHEBI:57540"/>
    </ligand>
</feature>
<feature type="binding site">
    <location>
        <position position="163"/>
    </location>
    <ligand>
        <name>substrate</name>
    </ligand>
</feature>
<feature type="binding site">
    <location>
        <position position="164"/>
    </location>
    <ligand>
        <name>NAD(+)</name>
        <dbReference type="ChEBI" id="CHEBI:57540"/>
    </ligand>
</feature>
<feature type="binding site">
    <location>
        <position position="172"/>
    </location>
    <ligand>
        <name>substrate</name>
    </ligand>
</feature>
<feature type="mutagenesis site" description="0.1% of wild-type activity." evidence="3">
    <original>Y</original>
    <variation>A</variation>
    <location>
        <position position="134"/>
    </location>
</feature>
<feature type="strand" evidence="8">
    <location>
        <begin position="1"/>
        <end position="8"/>
    </location>
</feature>
<feature type="helix" evidence="8">
    <location>
        <begin position="12"/>
        <end position="20"/>
    </location>
</feature>
<feature type="helix" evidence="8">
    <location>
        <begin position="22"/>
        <end position="24"/>
    </location>
</feature>
<feature type="strand" evidence="8">
    <location>
        <begin position="25"/>
        <end position="34"/>
    </location>
</feature>
<feature type="strand" evidence="8">
    <location>
        <begin position="43"/>
        <end position="47"/>
    </location>
</feature>
<feature type="helix" evidence="8">
    <location>
        <begin position="53"/>
        <end position="60"/>
    </location>
</feature>
<feature type="strand" evidence="8">
    <location>
        <begin position="64"/>
        <end position="68"/>
    </location>
</feature>
<feature type="helix" evidence="8">
    <location>
        <begin position="78"/>
        <end position="85"/>
    </location>
</feature>
<feature type="helix" evidence="8">
    <location>
        <begin position="87"/>
        <end position="98"/>
    </location>
</feature>
<feature type="strand" evidence="8">
    <location>
        <begin position="103"/>
        <end position="109"/>
    </location>
</feature>
<feature type="helix" evidence="8">
    <location>
        <begin position="110"/>
        <end position="113"/>
    </location>
</feature>
<feature type="helix" evidence="8">
    <location>
        <begin position="133"/>
        <end position="152"/>
    </location>
</feature>
<feature type="strand" evidence="8">
    <location>
        <begin position="156"/>
        <end position="161"/>
    </location>
</feature>
<feature type="strand" evidence="8">
    <location>
        <begin position="165"/>
        <end position="167"/>
    </location>
</feature>
<feature type="helix" evidence="8">
    <location>
        <begin position="173"/>
        <end position="176"/>
    </location>
</feature>
<feature type="helix" evidence="8">
    <location>
        <begin position="180"/>
        <end position="192"/>
    </location>
</feature>
<feature type="strand" evidence="8">
    <location>
        <begin position="200"/>
        <end position="203"/>
    </location>
</feature>
<feature type="helix" evidence="8">
    <location>
        <begin position="215"/>
        <end position="220"/>
    </location>
</feature>
<feature type="helix" evidence="8">
    <location>
        <begin position="228"/>
        <end position="231"/>
    </location>
</feature>
<feature type="helix" evidence="8">
    <location>
        <begin position="232"/>
        <end position="236"/>
    </location>
</feature>
<feature type="helix" evidence="8">
    <location>
        <begin position="247"/>
        <end position="249"/>
    </location>
</feature>
<feature type="helix" evidence="8">
    <location>
        <begin position="254"/>
        <end position="258"/>
    </location>
</feature>
<protein>
    <recommendedName>
        <fullName>Uronate dehydrogenase</fullName>
        <ecNumber evidence="1 2">1.1.1.203</ecNumber>
    </recommendedName>
    <alternativeName>
        <fullName>D-galacturonate dehydrogenase</fullName>
    </alternativeName>
    <alternativeName>
        <fullName>D-glucuronate dehydrogenase</fullName>
    </alternativeName>
    <alternativeName>
        <fullName>Hexuronate dehydrogenase</fullName>
    </alternativeName>
</protein>